<name>LON_META1</name>
<reference key="1">
    <citation type="journal article" date="2008" name="Infect. Immun.">
        <title>Genome of Mycoplasma arthritidis.</title>
        <authorList>
            <person name="Dybvig K."/>
            <person name="Zuhua C."/>
            <person name="Lao P."/>
            <person name="Jordan D.S."/>
            <person name="French C.T."/>
            <person name="Tu A.H."/>
            <person name="Loraine A.E."/>
        </authorList>
    </citation>
    <scope>NUCLEOTIDE SEQUENCE [LARGE SCALE GENOMIC DNA]</scope>
    <source>
        <strain>158L3-1</strain>
    </source>
</reference>
<organism>
    <name type="scientific">Metamycoplasma arthritidis (strain 158L3-1)</name>
    <name type="common">Mycoplasma arthritidis</name>
    <dbReference type="NCBI Taxonomy" id="243272"/>
    <lineage>
        <taxon>Bacteria</taxon>
        <taxon>Bacillati</taxon>
        <taxon>Mycoplasmatota</taxon>
        <taxon>Mycoplasmoidales</taxon>
        <taxon>Metamycoplasmataceae</taxon>
        <taxon>Metamycoplasma</taxon>
    </lineage>
</organism>
<accession>B3PN08</accession>
<feature type="chain" id="PRO_0000396580" description="Lon protease">
    <location>
        <begin position="1"/>
        <end position="835"/>
    </location>
</feature>
<feature type="domain" description="Lon N-terminal" evidence="3">
    <location>
        <begin position="4"/>
        <end position="224"/>
    </location>
</feature>
<feature type="domain" description="Lon proteolytic" evidence="2">
    <location>
        <begin position="649"/>
        <end position="832"/>
    </location>
</feature>
<feature type="active site" evidence="1">
    <location>
        <position position="738"/>
    </location>
</feature>
<feature type="active site" evidence="1">
    <location>
        <position position="781"/>
    </location>
</feature>
<feature type="binding site" evidence="1">
    <location>
        <begin position="412"/>
        <end position="419"/>
    </location>
    <ligand>
        <name>ATP</name>
        <dbReference type="ChEBI" id="CHEBI:30616"/>
    </ligand>
</feature>
<protein>
    <recommendedName>
        <fullName evidence="1">Lon protease</fullName>
        <ecNumber evidence="1">3.4.21.53</ecNumber>
    </recommendedName>
    <alternativeName>
        <fullName evidence="1">ATP-dependent protease La</fullName>
    </alternativeName>
</protein>
<gene>
    <name evidence="1" type="primary">lon</name>
    <name type="ordered locus">MARTH_orf627</name>
</gene>
<keyword id="KW-0067">ATP-binding</keyword>
<keyword id="KW-0963">Cytoplasm</keyword>
<keyword id="KW-0378">Hydrolase</keyword>
<keyword id="KW-0547">Nucleotide-binding</keyword>
<keyword id="KW-0645">Protease</keyword>
<keyword id="KW-1185">Reference proteome</keyword>
<keyword id="KW-0720">Serine protease</keyword>
<keyword id="KW-0346">Stress response</keyword>
<comment type="function">
    <text evidence="1">ATP-dependent serine protease that mediates the selective degradation of mutant and abnormal proteins as well as certain short-lived regulatory proteins. Required for cellular homeostasis and for survival from DNA damage and developmental changes induced by stress. Degrades polypeptides processively to yield small peptide fragments that are 5 to 10 amino acids long. Binds to DNA in a double-stranded, site-specific manner.</text>
</comment>
<comment type="catalytic activity">
    <reaction evidence="1">
        <text>Hydrolysis of proteins in presence of ATP.</text>
        <dbReference type="EC" id="3.4.21.53"/>
    </reaction>
</comment>
<comment type="subunit">
    <text evidence="1">Homohexamer. Organized in a ring with a central cavity.</text>
</comment>
<comment type="subcellular location">
    <subcellularLocation>
        <location evidence="1">Cytoplasm</location>
    </subcellularLocation>
</comment>
<comment type="induction">
    <text evidence="1">By heat shock.</text>
</comment>
<comment type="similarity">
    <text evidence="1">Belongs to the peptidase S16 family.</text>
</comment>
<dbReference type="EC" id="3.4.21.53" evidence="1"/>
<dbReference type="EMBL" id="CP001047">
    <property type="protein sequence ID" value="ACF07410.1"/>
    <property type="molecule type" value="Genomic_DNA"/>
</dbReference>
<dbReference type="RefSeq" id="WP_012498367.1">
    <property type="nucleotide sequence ID" value="NC_011025.1"/>
</dbReference>
<dbReference type="SMR" id="B3PN08"/>
<dbReference type="STRING" id="243272.MARTH_orf627"/>
<dbReference type="MEROPS" id="S16.001"/>
<dbReference type="KEGG" id="mat:MARTH_orf627"/>
<dbReference type="eggNOG" id="COG0466">
    <property type="taxonomic scope" value="Bacteria"/>
</dbReference>
<dbReference type="HOGENOM" id="CLU_004109_4_3_14"/>
<dbReference type="Proteomes" id="UP000008812">
    <property type="component" value="Chromosome"/>
</dbReference>
<dbReference type="GO" id="GO:0005737">
    <property type="term" value="C:cytoplasm"/>
    <property type="evidence" value="ECO:0007669"/>
    <property type="project" value="UniProtKB-SubCell"/>
</dbReference>
<dbReference type="GO" id="GO:0005524">
    <property type="term" value="F:ATP binding"/>
    <property type="evidence" value="ECO:0007669"/>
    <property type="project" value="UniProtKB-UniRule"/>
</dbReference>
<dbReference type="GO" id="GO:0016887">
    <property type="term" value="F:ATP hydrolysis activity"/>
    <property type="evidence" value="ECO:0007669"/>
    <property type="project" value="UniProtKB-UniRule"/>
</dbReference>
<dbReference type="GO" id="GO:0004176">
    <property type="term" value="F:ATP-dependent peptidase activity"/>
    <property type="evidence" value="ECO:0007669"/>
    <property type="project" value="UniProtKB-UniRule"/>
</dbReference>
<dbReference type="GO" id="GO:0043565">
    <property type="term" value="F:sequence-specific DNA binding"/>
    <property type="evidence" value="ECO:0007669"/>
    <property type="project" value="UniProtKB-UniRule"/>
</dbReference>
<dbReference type="GO" id="GO:0004252">
    <property type="term" value="F:serine-type endopeptidase activity"/>
    <property type="evidence" value="ECO:0007669"/>
    <property type="project" value="UniProtKB-UniRule"/>
</dbReference>
<dbReference type="GO" id="GO:0034605">
    <property type="term" value="P:cellular response to heat"/>
    <property type="evidence" value="ECO:0007669"/>
    <property type="project" value="UniProtKB-UniRule"/>
</dbReference>
<dbReference type="GO" id="GO:0006515">
    <property type="term" value="P:protein quality control for misfolded or incompletely synthesized proteins"/>
    <property type="evidence" value="ECO:0007669"/>
    <property type="project" value="UniProtKB-UniRule"/>
</dbReference>
<dbReference type="CDD" id="cd19500">
    <property type="entry name" value="RecA-like_Lon"/>
    <property type="match status" value="1"/>
</dbReference>
<dbReference type="FunFam" id="3.40.50.300:FF:000021">
    <property type="entry name" value="Lon protease homolog"/>
    <property type="match status" value="1"/>
</dbReference>
<dbReference type="Gene3D" id="1.10.8.60">
    <property type="match status" value="1"/>
</dbReference>
<dbReference type="Gene3D" id="1.20.5.5270">
    <property type="match status" value="1"/>
</dbReference>
<dbReference type="Gene3D" id="1.20.58.1480">
    <property type="match status" value="1"/>
</dbReference>
<dbReference type="Gene3D" id="3.30.230.10">
    <property type="match status" value="1"/>
</dbReference>
<dbReference type="Gene3D" id="2.30.130.40">
    <property type="entry name" value="LON domain-like"/>
    <property type="match status" value="1"/>
</dbReference>
<dbReference type="Gene3D" id="3.40.50.300">
    <property type="entry name" value="P-loop containing nucleotide triphosphate hydrolases"/>
    <property type="match status" value="1"/>
</dbReference>
<dbReference type="HAMAP" id="MF_01973">
    <property type="entry name" value="lon_bact"/>
    <property type="match status" value="1"/>
</dbReference>
<dbReference type="InterPro" id="IPR003593">
    <property type="entry name" value="AAA+_ATPase"/>
</dbReference>
<dbReference type="InterPro" id="IPR003959">
    <property type="entry name" value="ATPase_AAA_core"/>
</dbReference>
<dbReference type="InterPro" id="IPR027543">
    <property type="entry name" value="Lon_bac"/>
</dbReference>
<dbReference type="InterPro" id="IPR004815">
    <property type="entry name" value="Lon_bac/euk-typ"/>
</dbReference>
<dbReference type="InterPro" id="IPR054594">
    <property type="entry name" value="Lon_lid"/>
</dbReference>
<dbReference type="InterPro" id="IPR008269">
    <property type="entry name" value="Lon_proteolytic"/>
</dbReference>
<dbReference type="InterPro" id="IPR027065">
    <property type="entry name" value="Lon_Prtase"/>
</dbReference>
<dbReference type="InterPro" id="IPR003111">
    <property type="entry name" value="Lon_prtase_N"/>
</dbReference>
<dbReference type="InterPro" id="IPR046336">
    <property type="entry name" value="Lon_prtase_N_sf"/>
</dbReference>
<dbReference type="InterPro" id="IPR027417">
    <property type="entry name" value="P-loop_NTPase"/>
</dbReference>
<dbReference type="InterPro" id="IPR015947">
    <property type="entry name" value="PUA-like_sf"/>
</dbReference>
<dbReference type="InterPro" id="IPR020568">
    <property type="entry name" value="Ribosomal_Su5_D2-typ_SF"/>
</dbReference>
<dbReference type="InterPro" id="IPR014721">
    <property type="entry name" value="Ribsml_uS5_D2-typ_fold_subgr"/>
</dbReference>
<dbReference type="NCBIfam" id="TIGR00763">
    <property type="entry name" value="lon"/>
    <property type="match status" value="1"/>
</dbReference>
<dbReference type="PANTHER" id="PTHR10046">
    <property type="entry name" value="ATP DEPENDENT LON PROTEASE FAMILY MEMBER"/>
    <property type="match status" value="1"/>
</dbReference>
<dbReference type="Pfam" id="PF00004">
    <property type="entry name" value="AAA"/>
    <property type="match status" value="1"/>
</dbReference>
<dbReference type="Pfam" id="PF05362">
    <property type="entry name" value="Lon_C"/>
    <property type="match status" value="1"/>
</dbReference>
<dbReference type="Pfam" id="PF22667">
    <property type="entry name" value="Lon_lid"/>
    <property type="match status" value="1"/>
</dbReference>
<dbReference type="Pfam" id="PF02190">
    <property type="entry name" value="LON_substr_bdg"/>
    <property type="match status" value="1"/>
</dbReference>
<dbReference type="PIRSF" id="PIRSF001174">
    <property type="entry name" value="Lon_proteas"/>
    <property type="match status" value="1"/>
</dbReference>
<dbReference type="PRINTS" id="PR00830">
    <property type="entry name" value="ENDOLAPTASE"/>
</dbReference>
<dbReference type="SMART" id="SM00382">
    <property type="entry name" value="AAA"/>
    <property type="match status" value="1"/>
</dbReference>
<dbReference type="SUPFAM" id="SSF52540">
    <property type="entry name" value="P-loop containing nucleoside triphosphate hydrolases"/>
    <property type="match status" value="1"/>
</dbReference>
<dbReference type="SUPFAM" id="SSF88697">
    <property type="entry name" value="PUA domain-like"/>
    <property type="match status" value="1"/>
</dbReference>
<dbReference type="SUPFAM" id="SSF54211">
    <property type="entry name" value="Ribosomal protein S5 domain 2-like"/>
    <property type="match status" value="1"/>
</dbReference>
<dbReference type="PROSITE" id="PS51787">
    <property type="entry name" value="LON_N"/>
    <property type="match status" value="1"/>
</dbReference>
<dbReference type="PROSITE" id="PS51786">
    <property type="entry name" value="LON_PROTEOLYTIC"/>
    <property type="match status" value="1"/>
</dbReference>
<sequence>MKKLPYIAIRNQLIAPYSTATVKIGRPNSLAAIQFAQTGFNGEIYIFYTKDNKMVDSIKKTSDLEEYGVKAKIKEIVEQGKLQNVVFEVEELVKVKEIYKELGKYSFTSDIFASVTEVEYSGNFDILSDYRSKAKMLIEKLSNLHDEIGSYIYGGRRGIKELEKAFSANTNISPLTHDSFNVDIWKIIDALTIEHSWKEYFAIINETNLEKNYELAINMLINAIKMGKLDEEVNSTMRGDLENQQRDFLLRERLRQIKKLLKDDEAGAKAIENMEDAEENARQYPDYVIEALKTEQNRLASMMPASPEANISKTYIDLITTLPWKKVSGELLDIDNVRKILDKHHYGLEKPKERILEFISVLTYTKKENEKNEYVPVKGEENRFIDKNLFVNKTGNFLKDRVNNIPILTLIGPPGTGKTTLAKSIAEALGRQFVKISLGGVKDESEIRGHRRTYVGALPGKIISGIKKAGVSNPVILLDEIDKMSSDFRGDPLSALLEVLDPEQNTNFQDHYLDLEYDLSKVLFIATANSFDSIPAPLYDRVEFLELSTYTLIEKTRIARTHLLSKILSLNALTEKQYQITDEVLAYIIKNYTRESGVRNLQRLLDSIARKIVVRILDKKVDKEFVIDKAIVREFLGPELYNEKGDETQPKAGVVNALAYTAYGGTSMTIEVTTFPTTAKGALNLTGQLKDVMRESATISLAYVRSNAEKFGIKDFDFENTSIHIHVPEGAIQKDGPSAGVTFTTAIISALSKKAVPNTIAMTGEITLRGKVLPIGGLKEKSLAASQIGIKTIFIPKDNEKNLIDVPEEVKKDIKFVPVEYYDEIFKYIFEAKNK</sequence>
<evidence type="ECO:0000255" key="1">
    <source>
        <dbReference type="HAMAP-Rule" id="MF_01973"/>
    </source>
</evidence>
<evidence type="ECO:0000255" key="2">
    <source>
        <dbReference type="PROSITE-ProRule" id="PRU01122"/>
    </source>
</evidence>
<evidence type="ECO:0000255" key="3">
    <source>
        <dbReference type="PROSITE-ProRule" id="PRU01123"/>
    </source>
</evidence>
<proteinExistence type="inferred from homology"/>